<organism>
    <name type="scientific">Bacillus cereus</name>
    <dbReference type="NCBI Taxonomy" id="1396"/>
    <lineage>
        <taxon>Bacteria</taxon>
        <taxon>Bacillati</taxon>
        <taxon>Bacillota</taxon>
        <taxon>Bacilli</taxon>
        <taxon>Bacillales</taxon>
        <taxon>Bacillaceae</taxon>
        <taxon>Bacillus</taxon>
        <taxon>Bacillus cereus group</taxon>
    </lineage>
</organism>
<sequence length="366" mass="39867">MTLEIFEYLEKYDYEQVVFCQDKESGLKAIIAIHDTTLGPALGGTRMWTYDSEEAAIEDALRLAKGMTYKNAAAGLNLGGAKTVIIGDPRKDKSEAMFRALGRYIQGLNGRYITAEDVGTTVDDMDIIHEETDFVTGISPSFGSSGNPSPVTAYGVYRGMKAAAKEAFGTDNLEGKVIAVQGVGNVAYHLCKHLHAEGAKLIVTDINKEAVQRAVEEFGASAVEPNEIYGVECDIYAPCALGATVNDETIPQLKAKVIAGSANNQLKEDRHGDIIHEMGIVYAPDYVINAGGVINVADELYGYNRERALKRVESIYDTIAKVIEISKRDGIATYVAADRLAEERIASLKNSRSTYLRNGHDIISRR</sequence>
<evidence type="ECO:0000255" key="1"/>
<evidence type="ECO:0000255" key="2">
    <source>
        <dbReference type="PROSITE-ProRule" id="PRU10011"/>
    </source>
</evidence>
<evidence type="ECO:0000269" key="3">
    <source>
    </source>
</evidence>
<evidence type="ECO:0000305" key="4"/>
<proteinExistence type="evidence at protein level"/>
<accession>P0A393</accession>
<accession>Q59194</accession>
<name>DHLE_BACCE</name>
<reference key="1">
    <citation type="journal article" date="1997" name="J. Biotechnol.">
        <title>Cloning, sequencing and overexpression of the leucine dehydrogenase gene from Bacillus cereus.</title>
        <authorList>
            <person name="Stoyan T."/>
            <person name="Recktenwald A."/>
            <person name="Kula M.R."/>
        </authorList>
    </citation>
    <scope>NUCLEOTIDE SEQUENCE [GENOMIC DNA]</scope>
    <scope>PROTEIN SEQUENCE OF 1-18; 47-56; 160-192; 214-254 AND 279-298</scope>
    <scope>FUNCTION</scope>
    <scope>CATALYTIC ACTIVITY</scope>
    <source>
        <strain>DSM 626 / NCIMB 11796 / T</strain>
    </source>
</reference>
<feature type="chain" id="PRO_0000182800" description="Leucine dehydrogenase">
    <location>
        <begin position="1"/>
        <end position="366"/>
    </location>
</feature>
<feature type="active site" evidence="2">
    <location>
        <position position="82"/>
    </location>
</feature>
<feature type="binding site" evidence="1">
    <location>
        <begin position="182"/>
        <end position="188"/>
    </location>
    <ligand>
        <name>NAD(+)</name>
        <dbReference type="ChEBI" id="CHEBI:57540"/>
    </ligand>
</feature>
<gene>
    <name type="primary">ldh</name>
</gene>
<dbReference type="EC" id="1.4.1.9"/>
<dbReference type="EMBL" id="U51099">
    <property type="protein sequence ID" value="AAA96314.1"/>
    <property type="molecule type" value="Genomic_DNA"/>
</dbReference>
<dbReference type="RefSeq" id="WP_000171355.1">
    <property type="nucleotide sequence ID" value="NZ_WBPO01000030.1"/>
</dbReference>
<dbReference type="SMR" id="P0A393"/>
<dbReference type="eggNOG" id="COG0334">
    <property type="taxonomic scope" value="Bacteria"/>
</dbReference>
<dbReference type="OMA" id="TYVADMD"/>
<dbReference type="UniPathway" id="UPA00363">
    <property type="reaction ID" value="UER00858"/>
</dbReference>
<dbReference type="GO" id="GO:0050049">
    <property type="term" value="F:L-leucine dehydrogenase activity"/>
    <property type="evidence" value="ECO:0007669"/>
    <property type="project" value="UniProtKB-EC"/>
</dbReference>
<dbReference type="GO" id="GO:0006552">
    <property type="term" value="P:L-leucine catabolic process"/>
    <property type="evidence" value="ECO:0007669"/>
    <property type="project" value="UniProtKB-UniPathway"/>
</dbReference>
<dbReference type="CDD" id="cd01075">
    <property type="entry name" value="NAD_bind_Leu_Phe_Val_DH"/>
    <property type="match status" value="1"/>
</dbReference>
<dbReference type="FunFam" id="3.40.50.10860:FF:000010">
    <property type="entry name" value="Leucine dehydrogenase"/>
    <property type="match status" value="1"/>
</dbReference>
<dbReference type="FunFam" id="3.40.50.720:FF:000196">
    <property type="entry name" value="Leucine dehydrogenase"/>
    <property type="match status" value="1"/>
</dbReference>
<dbReference type="Gene3D" id="3.40.50.10860">
    <property type="entry name" value="Leucine Dehydrogenase, chain A, domain 1"/>
    <property type="match status" value="1"/>
</dbReference>
<dbReference type="Gene3D" id="3.40.50.720">
    <property type="entry name" value="NAD(P)-binding Rossmann-like Domain"/>
    <property type="match status" value="1"/>
</dbReference>
<dbReference type="InterPro" id="IPR046346">
    <property type="entry name" value="Aminoacid_DH-like_N_sf"/>
</dbReference>
<dbReference type="InterPro" id="IPR006095">
    <property type="entry name" value="Glu/Leu/Phe/Val/Trp_DH"/>
</dbReference>
<dbReference type="InterPro" id="IPR006096">
    <property type="entry name" value="Glu/Leu/Phe/Val/Trp_DH_C"/>
</dbReference>
<dbReference type="InterPro" id="IPR006097">
    <property type="entry name" value="Glu/Leu/Phe/Val/Trp_DH_dimer"/>
</dbReference>
<dbReference type="InterPro" id="IPR033524">
    <property type="entry name" value="Glu/Leu/Phe/Val_DH_AS"/>
</dbReference>
<dbReference type="InterPro" id="IPR016211">
    <property type="entry name" value="Glu/Phe/Leu/Val/Trp_DH_bac/arc"/>
</dbReference>
<dbReference type="InterPro" id="IPR036291">
    <property type="entry name" value="NAD(P)-bd_dom_sf"/>
</dbReference>
<dbReference type="PANTHER" id="PTHR42722">
    <property type="entry name" value="LEUCINE DEHYDROGENASE"/>
    <property type="match status" value="1"/>
</dbReference>
<dbReference type="PANTHER" id="PTHR42722:SF1">
    <property type="entry name" value="VALINE DEHYDROGENASE"/>
    <property type="match status" value="1"/>
</dbReference>
<dbReference type="Pfam" id="PF00208">
    <property type="entry name" value="ELFV_dehydrog"/>
    <property type="match status" value="2"/>
</dbReference>
<dbReference type="Pfam" id="PF02812">
    <property type="entry name" value="ELFV_dehydrog_N"/>
    <property type="match status" value="1"/>
</dbReference>
<dbReference type="PIRSF" id="PIRSF000188">
    <property type="entry name" value="Phe_leu_dh"/>
    <property type="match status" value="1"/>
</dbReference>
<dbReference type="PRINTS" id="PR00082">
    <property type="entry name" value="GLFDHDRGNASE"/>
</dbReference>
<dbReference type="SMART" id="SM00839">
    <property type="entry name" value="ELFV_dehydrog"/>
    <property type="match status" value="1"/>
</dbReference>
<dbReference type="SUPFAM" id="SSF53223">
    <property type="entry name" value="Aminoacid dehydrogenase-like, N-terminal domain"/>
    <property type="match status" value="1"/>
</dbReference>
<dbReference type="SUPFAM" id="SSF51735">
    <property type="entry name" value="NAD(P)-binding Rossmann-fold domains"/>
    <property type="match status" value="1"/>
</dbReference>
<dbReference type="PROSITE" id="PS00074">
    <property type="entry name" value="GLFV_DEHYDROGENASE"/>
    <property type="match status" value="1"/>
</dbReference>
<protein>
    <recommendedName>
        <fullName>Leucine dehydrogenase</fullName>
        <shortName>LeuDH</shortName>
        <ecNumber>1.4.1.9</ecNumber>
    </recommendedName>
</protein>
<keyword id="KW-0101">Branched-chain amino acid catabolism</keyword>
<keyword id="KW-0903">Direct protein sequencing</keyword>
<keyword id="KW-0520">NAD</keyword>
<keyword id="KW-0560">Oxidoreductase</keyword>
<comment type="function">
    <text evidence="3">Catalyzes the reversible deamination of L-leucine to 4-methyl-2-oxopentanoate.</text>
</comment>
<comment type="catalytic activity">
    <reaction evidence="3">
        <text>L-leucine + NAD(+) + H2O = 4-methyl-2-oxopentanoate + NH4(+) + NADH + H(+)</text>
        <dbReference type="Rhea" id="RHEA:12220"/>
        <dbReference type="ChEBI" id="CHEBI:15377"/>
        <dbReference type="ChEBI" id="CHEBI:15378"/>
        <dbReference type="ChEBI" id="CHEBI:17865"/>
        <dbReference type="ChEBI" id="CHEBI:28938"/>
        <dbReference type="ChEBI" id="CHEBI:57427"/>
        <dbReference type="ChEBI" id="CHEBI:57540"/>
        <dbReference type="ChEBI" id="CHEBI:57945"/>
        <dbReference type="EC" id="1.4.1.9"/>
    </reaction>
</comment>
<comment type="pathway">
    <text>Amino-acid degradation; L-leucine degradation; 4-methyl-2-oxopentanoate from L-leucine (dehydrogenase route): step 1/1.</text>
</comment>
<comment type="similarity">
    <text evidence="4">Belongs to the Glu/Leu/Phe/Val dehydrogenases family.</text>
</comment>